<keyword id="KW-0687">Ribonucleoprotein</keyword>
<keyword id="KW-0689">Ribosomal protein</keyword>
<keyword id="KW-0694">RNA-binding</keyword>
<keyword id="KW-0699">rRNA-binding</keyword>
<organism>
    <name type="scientific">Burkholderia orbicola (strain MC0-3)</name>
    <dbReference type="NCBI Taxonomy" id="406425"/>
    <lineage>
        <taxon>Bacteria</taxon>
        <taxon>Pseudomonadati</taxon>
        <taxon>Pseudomonadota</taxon>
        <taxon>Betaproteobacteria</taxon>
        <taxon>Burkholderiales</taxon>
        <taxon>Burkholderiaceae</taxon>
        <taxon>Burkholderia</taxon>
        <taxon>Burkholderia cepacia complex</taxon>
        <taxon>Burkholderia orbicola</taxon>
    </lineage>
</organism>
<accession>B1JU39</accession>
<proteinExistence type="inferred from homology"/>
<dbReference type="EMBL" id="CP000958">
    <property type="protein sequence ID" value="ACA89524.1"/>
    <property type="molecule type" value="Genomic_DNA"/>
</dbReference>
<dbReference type="RefSeq" id="WP_006752931.1">
    <property type="nucleotide sequence ID" value="NC_010508.1"/>
</dbReference>
<dbReference type="SMR" id="B1JU39"/>
<dbReference type="GeneID" id="98107143"/>
<dbReference type="KEGG" id="bcm:Bcenmc03_0344"/>
<dbReference type="HOGENOM" id="CLU_065898_2_2_4"/>
<dbReference type="Proteomes" id="UP000002169">
    <property type="component" value="Chromosome 1"/>
</dbReference>
<dbReference type="GO" id="GO:0015935">
    <property type="term" value="C:small ribosomal subunit"/>
    <property type="evidence" value="ECO:0007669"/>
    <property type="project" value="InterPro"/>
</dbReference>
<dbReference type="GO" id="GO:0019843">
    <property type="term" value="F:rRNA binding"/>
    <property type="evidence" value="ECO:0007669"/>
    <property type="project" value="UniProtKB-UniRule"/>
</dbReference>
<dbReference type="GO" id="GO:0003735">
    <property type="term" value="F:structural constituent of ribosome"/>
    <property type="evidence" value="ECO:0007669"/>
    <property type="project" value="InterPro"/>
</dbReference>
<dbReference type="GO" id="GO:0006412">
    <property type="term" value="P:translation"/>
    <property type="evidence" value="ECO:0007669"/>
    <property type="project" value="UniProtKB-UniRule"/>
</dbReference>
<dbReference type="FunFam" id="3.30.160.20:FF:000001">
    <property type="entry name" value="30S ribosomal protein S5"/>
    <property type="match status" value="1"/>
</dbReference>
<dbReference type="FunFam" id="3.30.230.10:FF:000002">
    <property type="entry name" value="30S ribosomal protein S5"/>
    <property type="match status" value="1"/>
</dbReference>
<dbReference type="Gene3D" id="3.30.160.20">
    <property type="match status" value="1"/>
</dbReference>
<dbReference type="Gene3D" id="3.30.230.10">
    <property type="match status" value="1"/>
</dbReference>
<dbReference type="HAMAP" id="MF_01307_B">
    <property type="entry name" value="Ribosomal_uS5_B"/>
    <property type="match status" value="1"/>
</dbReference>
<dbReference type="InterPro" id="IPR020568">
    <property type="entry name" value="Ribosomal_Su5_D2-typ_SF"/>
</dbReference>
<dbReference type="InterPro" id="IPR000851">
    <property type="entry name" value="Ribosomal_uS5"/>
</dbReference>
<dbReference type="InterPro" id="IPR005712">
    <property type="entry name" value="Ribosomal_uS5_bac-type"/>
</dbReference>
<dbReference type="InterPro" id="IPR005324">
    <property type="entry name" value="Ribosomal_uS5_C"/>
</dbReference>
<dbReference type="InterPro" id="IPR013810">
    <property type="entry name" value="Ribosomal_uS5_N"/>
</dbReference>
<dbReference type="InterPro" id="IPR018192">
    <property type="entry name" value="Ribosomal_uS5_N_CS"/>
</dbReference>
<dbReference type="InterPro" id="IPR014721">
    <property type="entry name" value="Ribsml_uS5_D2-typ_fold_subgr"/>
</dbReference>
<dbReference type="NCBIfam" id="TIGR01021">
    <property type="entry name" value="rpsE_bact"/>
    <property type="match status" value="1"/>
</dbReference>
<dbReference type="PANTHER" id="PTHR48277">
    <property type="entry name" value="MITOCHONDRIAL RIBOSOMAL PROTEIN S5"/>
    <property type="match status" value="1"/>
</dbReference>
<dbReference type="PANTHER" id="PTHR48277:SF1">
    <property type="entry name" value="MITOCHONDRIAL RIBOSOMAL PROTEIN S5"/>
    <property type="match status" value="1"/>
</dbReference>
<dbReference type="Pfam" id="PF00333">
    <property type="entry name" value="Ribosomal_S5"/>
    <property type="match status" value="1"/>
</dbReference>
<dbReference type="Pfam" id="PF03719">
    <property type="entry name" value="Ribosomal_S5_C"/>
    <property type="match status" value="1"/>
</dbReference>
<dbReference type="SUPFAM" id="SSF54768">
    <property type="entry name" value="dsRNA-binding domain-like"/>
    <property type="match status" value="1"/>
</dbReference>
<dbReference type="SUPFAM" id="SSF54211">
    <property type="entry name" value="Ribosomal protein S5 domain 2-like"/>
    <property type="match status" value="1"/>
</dbReference>
<dbReference type="PROSITE" id="PS00585">
    <property type="entry name" value="RIBOSOMAL_S5"/>
    <property type="match status" value="1"/>
</dbReference>
<dbReference type="PROSITE" id="PS50881">
    <property type="entry name" value="S5_DSRBD"/>
    <property type="match status" value="1"/>
</dbReference>
<sequence length="172" mass="18076">MAKMQAKVQADERDDGLREKMISVNRVTKVVKGGRILGFAALTVVGDGDGRIGMGKGKAKEVPVAVQKAMEQARRNMFKVPLKNGTLQHEVHGKHGASAVLLAPAKAGTGVIAGGPMRAVFDVMGVQNVVAKSHGSTNPYNLVRATLDGLRKQSTPADIAAKRGKSVEDILG</sequence>
<protein>
    <recommendedName>
        <fullName evidence="1">Small ribosomal subunit protein uS5</fullName>
    </recommendedName>
    <alternativeName>
        <fullName evidence="2">30S ribosomal protein S5</fullName>
    </alternativeName>
</protein>
<name>RS5_BURO0</name>
<comment type="function">
    <text evidence="1">With S4 and S12 plays an important role in translational accuracy.</text>
</comment>
<comment type="function">
    <text evidence="1">Located at the back of the 30S subunit body where it stabilizes the conformation of the head with respect to the body.</text>
</comment>
<comment type="subunit">
    <text evidence="1">Part of the 30S ribosomal subunit. Contacts proteins S4 and S8.</text>
</comment>
<comment type="domain">
    <text>The N-terminal domain interacts with the head of the 30S subunit; the C-terminal domain interacts with the body and contacts protein S4. The interaction surface between S4 and S5 is involved in control of translational fidelity.</text>
</comment>
<comment type="similarity">
    <text evidence="1">Belongs to the universal ribosomal protein uS5 family.</text>
</comment>
<feature type="chain" id="PRO_1000140841" description="Small ribosomal subunit protein uS5">
    <location>
        <begin position="1"/>
        <end position="172"/>
    </location>
</feature>
<feature type="domain" description="S5 DRBM" evidence="1">
    <location>
        <begin position="17"/>
        <end position="80"/>
    </location>
</feature>
<gene>
    <name evidence="1" type="primary">rpsE</name>
    <name type="ordered locus">Bcenmc03_0344</name>
</gene>
<evidence type="ECO:0000255" key="1">
    <source>
        <dbReference type="HAMAP-Rule" id="MF_01307"/>
    </source>
</evidence>
<evidence type="ECO:0000305" key="2"/>
<reference key="1">
    <citation type="submission" date="2008-02" db="EMBL/GenBank/DDBJ databases">
        <title>Complete sequence of chromosome 1 of Burkholderia cenocepacia MC0-3.</title>
        <authorList>
            <person name="Copeland A."/>
            <person name="Lucas S."/>
            <person name="Lapidus A."/>
            <person name="Barry K."/>
            <person name="Bruce D."/>
            <person name="Goodwin L."/>
            <person name="Glavina del Rio T."/>
            <person name="Dalin E."/>
            <person name="Tice H."/>
            <person name="Pitluck S."/>
            <person name="Chain P."/>
            <person name="Malfatti S."/>
            <person name="Shin M."/>
            <person name="Vergez L."/>
            <person name="Schmutz J."/>
            <person name="Larimer F."/>
            <person name="Land M."/>
            <person name="Hauser L."/>
            <person name="Kyrpides N."/>
            <person name="Mikhailova N."/>
            <person name="Tiedje J."/>
            <person name="Richardson P."/>
        </authorList>
    </citation>
    <scope>NUCLEOTIDE SEQUENCE [LARGE SCALE GENOMIC DNA]</scope>
    <source>
        <strain>MC0-3</strain>
    </source>
</reference>